<gene>
    <name type="primary">mdt-1.2</name>
    <name type="ORF">T23C6.1</name>
</gene>
<comment type="function">
    <text evidence="1">Component of the Mediator complex, a coactivator involved in the regulated transcription of nearly all RNA polymerase II-dependent genes. Mediator functions as a bridge to convey information from gene-specific regulatory proteins to the basal RNA polymerase II transcription machinery. Mediator is recruited to promoters by direct interactions with regulatory proteins and serves as a scaffold for the assembly of a functional preinitiation complex with RNA polymerase II and the general transcription factors (By similarity).</text>
</comment>
<comment type="subunit">
    <text evidence="1">Component of the Mediator complex.</text>
</comment>
<comment type="subcellular location">
    <subcellularLocation>
        <location evidence="1">Nucleus</location>
    </subcellularLocation>
</comment>
<comment type="similarity">
    <text evidence="3">Belongs to the Mediator complex subunit 1 family.</text>
</comment>
<sequence length="522" mass="60120">MVSTPSPKTKVYLLEQRKNQELNIEHIDEEMRLEQVRQAASKMEWTSFGQAVRRNLLEKRNTIDADGRIDVLNGIAYMKTKMPIEENNLMEEKIRVMAESLGCLHKQTSRGWSINRQEDLIMDFTVNDGEVTTVVLSFWEEPSFYSPEATRMLQLGMWTELRNRISDMLLTYDKLLSRDDRRNCMGAMRMLEMLFGHFSQDPSYTSIHRSNYGFYLPRNDLRAGRVYYLAEPHFRNIRSKDHIFQLQKDDHEVLPYFEFSFAKHDSPCTLPEFDTKGWAESIEANAVICMKLSRGFNLTETTRKKLGAISAKTPSVKHFTNSYRYVTGAVKIENNLQMITQFGDGQTQHFYNVDVNQLRNDGDSVITEIYLKHLQDFHEIIAILRNEAMHISLWESMISACYEKQGMKKHTVAAIKMDVFLTREQIVITFDTKFAPVKVVIQDSGVCEAKVNVVHAQTGLQIAEKIDETLSRKLNETWSIPNMLTYAVSGSDCNLAKIKVPLRSENPETVGPIPTYAAGRSF</sequence>
<protein>
    <recommendedName>
        <fullName>Mediator of RNA polymerase II transcription subunit 1.2</fullName>
    </recommendedName>
    <alternativeName>
        <fullName>Mediator complex subunit 1.2</fullName>
    </alternativeName>
</protein>
<feature type="chain" id="PRO_0000302027" description="Mediator of RNA polymerase II transcription subunit 1.2">
    <location>
        <begin position="1"/>
        <end position="522"/>
    </location>
</feature>
<feature type="coiled-coil region" evidence="2">
    <location>
        <begin position="13"/>
        <end position="40"/>
    </location>
</feature>
<accession>O02042</accession>
<name>MED1L_CAEEL</name>
<proteinExistence type="inferred from homology"/>
<organism>
    <name type="scientific">Caenorhabditis elegans</name>
    <dbReference type="NCBI Taxonomy" id="6239"/>
    <lineage>
        <taxon>Eukaryota</taxon>
        <taxon>Metazoa</taxon>
        <taxon>Ecdysozoa</taxon>
        <taxon>Nematoda</taxon>
        <taxon>Chromadorea</taxon>
        <taxon>Rhabditida</taxon>
        <taxon>Rhabditina</taxon>
        <taxon>Rhabditomorpha</taxon>
        <taxon>Rhabditoidea</taxon>
        <taxon>Rhabditidae</taxon>
        <taxon>Peloderinae</taxon>
        <taxon>Caenorhabditis</taxon>
    </lineage>
</organism>
<dbReference type="EMBL" id="FO080162">
    <property type="protein sequence ID" value="CCD61703.1"/>
    <property type="molecule type" value="Genomic_DNA"/>
</dbReference>
<dbReference type="PIR" id="T15119">
    <property type="entry name" value="T15119"/>
</dbReference>
<dbReference type="RefSeq" id="NP_510778.1">
    <property type="nucleotide sequence ID" value="NM_078377.6"/>
</dbReference>
<dbReference type="SMR" id="O02042"/>
<dbReference type="BioGRID" id="46632">
    <property type="interactions" value="8"/>
</dbReference>
<dbReference type="FunCoup" id="O02042">
    <property type="interactions" value="1669"/>
</dbReference>
<dbReference type="IntAct" id="O02042">
    <property type="interactions" value="9"/>
</dbReference>
<dbReference type="STRING" id="6239.T23C6.1.1"/>
<dbReference type="PaxDb" id="6239-T23C6.1"/>
<dbReference type="PeptideAtlas" id="O02042"/>
<dbReference type="EnsemblMetazoa" id="T23C6.1.1">
    <property type="protein sequence ID" value="T23C6.1.1"/>
    <property type="gene ID" value="WBGene00007011"/>
</dbReference>
<dbReference type="GeneID" id="181755"/>
<dbReference type="KEGG" id="cel:CELE_T23C6.1"/>
<dbReference type="UCSC" id="T23C6.1">
    <property type="organism name" value="c. elegans"/>
</dbReference>
<dbReference type="AGR" id="WB:WBGene00007011"/>
<dbReference type="CTD" id="181755"/>
<dbReference type="WormBase" id="T23C6.1">
    <property type="protein sequence ID" value="CE07526"/>
    <property type="gene ID" value="WBGene00007011"/>
    <property type="gene designation" value="mdt-1.2"/>
</dbReference>
<dbReference type="eggNOG" id="ENOG502TFH1">
    <property type="taxonomic scope" value="Eukaryota"/>
</dbReference>
<dbReference type="GeneTree" id="ENSGT00970000196378"/>
<dbReference type="HOGENOM" id="CLU_521997_0_0_1"/>
<dbReference type="InParanoid" id="O02042"/>
<dbReference type="OMA" id="WEEPSFY"/>
<dbReference type="OrthoDB" id="5778006at2759"/>
<dbReference type="SignaLink" id="O02042"/>
<dbReference type="PRO" id="PR:O02042"/>
<dbReference type="Proteomes" id="UP000001940">
    <property type="component" value="Chromosome X"/>
</dbReference>
<dbReference type="Bgee" id="WBGene00007011">
    <property type="expression patterns" value="Expressed in germ line (C elegans) and 4 other cell types or tissues"/>
</dbReference>
<dbReference type="GO" id="GO:0005634">
    <property type="term" value="C:nucleus"/>
    <property type="evidence" value="ECO:0007669"/>
    <property type="project" value="UniProtKB-SubCell"/>
</dbReference>
<evidence type="ECO:0000250" key="1"/>
<evidence type="ECO:0000255" key="2"/>
<evidence type="ECO:0000305" key="3"/>
<reference key="1">
    <citation type="journal article" date="1998" name="Science">
        <title>Genome sequence of the nematode C. elegans: a platform for investigating biology.</title>
        <authorList>
            <consortium name="The C. elegans sequencing consortium"/>
        </authorList>
    </citation>
    <scope>NUCLEOTIDE SEQUENCE [LARGE SCALE GENOMIC DNA]</scope>
    <source>
        <strain>Bristol N2</strain>
    </source>
</reference>
<keyword id="KW-0010">Activator</keyword>
<keyword id="KW-0175">Coiled coil</keyword>
<keyword id="KW-0539">Nucleus</keyword>
<keyword id="KW-1185">Reference proteome</keyword>
<keyword id="KW-0804">Transcription</keyword>
<keyword id="KW-0805">Transcription regulation</keyword>